<proteinExistence type="inferred from homology"/>
<organism>
    <name type="scientific">Rhizobium meliloti (strain 1021)</name>
    <name type="common">Ensifer meliloti</name>
    <name type="synonym">Sinorhizobium meliloti</name>
    <dbReference type="NCBI Taxonomy" id="266834"/>
    <lineage>
        <taxon>Bacteria</taxon>
        <taxon>Pseudomonadati</taxon>
        <taxon>Pseudomonadota</taxon>
        <taxon>Alphaproteobacteria</taxon>
        <taxon>Hyphomicrobiales</taxon>
        <taxon>Rhizobiaceae</taxon>
        <taxon>Sinorhizobium/Ensifer group</taxon>
        <taxon>Sinorhizobium</taxon>
    </lineage>
</organism>
<name>Y4784_RHIME</name>
<gene>
    <name type="ordered locus">RB0084</name>
    <name type="ORF">SMb20084</name>
</gene>
<dbReference type="EMBL" id="AL591985">
    <property type="protein sequence ID" value="CAC48484.1"/>
    <property type="molecule type" value="Genomic_DNA"/>
</dbReference>
<dbReference type="PIR" id="D95852">
    <property type="entry name" value="D95852"/>
</dbReference>
<dbReference type="RefSeq" id="NP_436624.1">
    <property type="nucleotide sequence ID" value="NC_003078.1"/>
</dbReference>
<dbReference type="RefSeq" id="WP_010975005.1">
    <property type="nucleotide sequence ID" value="NC_003078.1"/>
</dbReference>
<dbReference type="EnsemblBacteria" id="CAC48484">
    <property type="protein sequence ID" value="CAC48484"/>
    <property type="gene ID" value="SM_b20084"/>
</dbReference>
<dbReference type="KEGG" id="sme:SM_b20084"/>
<dbReference type="PATRIC" id="fig|266834.11.peg.4994"/>
<dbReference type="eggNOG" id="COG5487">
    <property type="taxonomic scope" value="Bacteria"/>
</dbReference>
<dbReference type="HOGENOM" id="CLU_187346_1_1_5"/>
<dbReference type="OrthoDB" id="8021162at2"/>
<dbReference type="PRO" id="PR:Q92X78"/>
<dbReference type="Proteomes" id="UP000001976">
    <property type="component" value="Plasmid pSymB"/>
</dbReference>
<dbReference type="GO" id="GO:0005886">
    <property type="term" value="C:plasma membrane"/>
    <property type="evidence" value="ECO:0007669"/>
    <property type="project" value="UniProtKB-SubCell"/>
</dbReference>
<dbReference type="HAMAP" id="MF_01361">
    <property type="entry name" value="UPF0391"/>
    <property type="match status" value="1"/>
</dbReference>
<dbReference type="InterPro" id="IPR009760">
    <property type="entry name" value="DUF1328"/>
</dbReference>
<dbReference type="NCBIfam" id="NF010234">
    <property type="entry name" value="PRK13682.2-5"/>
    <property type="match status" value="1"/>
</dbReference>
<dbReference type="Pfam" id="PF07043">
    <property type="entry name" value="DUF1328"/>
    <property type="match status" value="1"/>
</dbReference>
<dbReference type="PIRSF" id="PIRSF036466">
    <property type="entry name" value="UCP036466"/>
    <property type="match status" value="1"/>
</dbReference>
<accession>Q92X78</accession>
<feature type="chain" id="PRO_0000256774" description="UPF0391 membrane protein RB0084">
    <location>
        <begin position="1"/>
        <end position="57"/>
    </location>
</feature>
<feature type="transmembrane region" description="Helical" evidence="1">
    <location>
        <begin position="4"/>
        <end position="24"/>
    </location>
</feature>
<feature type="transmembrane region" description="Helical" evidence="1">
    <location>
        <begin position="33"/>
        <end position="53"/>
    </location>
</feature>
<evidence type="ECO:0000255" key="1">
    <source>
        <dbReference type="HAMAP-Rule" id="MF_01361"/>
    </source>
</evidence>
<sequence>MLKWALIFFVISLIAGFLGFSGVSAATAGIAKILFYIAVIIFLVFLVLALAVGGAVT</sequence>
<comment type="subcellular location">
    <subcellularLocation>
        <location evidence="1">Cell membrane</location>
        <topology evidence="1">Multi-pass membrane protein</topology>
    </subcellularLocation>
</comment>
<comment type="similarity">
    <text evidence="1">Belongs to the UPF0391 family.</text>
</comment>
<reference key="1">
    <citation type="journal article" date="2001" name="Proc. Natl. Acad. Sci. U.S.A.">
        <title>The complete sequence of the 1,683-kb pSymB megaplasmid from the N2-fixing endosymbiont Sinorhizobium meliloti.</title>
        <authorList>
            <person name="Finan T.M."/>
            <person name="Weidner S."/>
            <person name="Wong K."/>
            <person name="Buhrmester J."/>
            <person name="Chain P."/>
            <person name="Vorhoelter F.J."/>
            <person name="Hernandez-Lucas I."/>
            <person name="Becker A."/>
            <person name="Cowie A."/>
            <person name="Gouzy J."/>
            <person name="Golding B."/>
            <person name="Puehler A."/>
        </authorList>
    </citation>
    <scope>NUCLEOTIDE SEQUENCE [LARGE SCALE GENOMIC DNA]</scope>
    <source>
        <strain>1021</strain>
    </source>
</reference>
<reference key="2">
    <citation type="journal article" date="2001" name="Science">
        <title>The composite genome of the legume symbiont Sinorhizobium meliloti.</title>
        <authorList>
            <person name="Galibert F."/>
            <person name="Finan T.M."/>
            <person name="Long S.R."/>
            <person name="Puehler A."/>
            <person name="Abola P."/>
            <person name="Ampe F."/>
            <person name="Barloy-Hubler F."/>
            <person name="Barnett M.J."/>
            <person name="Becker A."/>
            <person name="Boistard P."/>
            <person name="Bothe G."/>
            <person name="Boutry M."/>
            <person name="Bowser L."/>
            <person name="Buhrmester J."/>
            <person name="Cadieu E."/>
            <person name="Capela D."/>
            <person name="Chain P."/>
            <person name="Cowie A."/>
            <person name="Davis R.W."/>
            <person name="Dreano S."/>
            <person name="Federspiel N.A."/>
            <person name="Fisher R.F."/>
            <person name="Gloux S."/>
            <person name="Godrie T."/>
            <person name="Goffeau A."/>
            <person name="Golding B."/>
            <person name="Gouzy J."/>
            <person name="Gurjal M."/>
            <person name="Hernandez-Lucas I."/>
            <person name="Hong A."/>
            <person name="Huizar L."/>
            <person name="Hyman R.W."/>
            <person name="Jones T."/>
            <person name="Kahn D."/>
            <person name="Kahn M.L."/>
            <person name="Kalman S."/>
            <person name="Keating D.H."/>
            <person name="Kiss E."/>
            <person name="Komp C."/>
            <person name="Lelaure V."/>
            <person name="Masuy D."/>
            <person name="Palm C."/>
            <person name="Peck M.C."/>
            <person name="Pohl T.M."/>
            <person name="Portetelle D."/>
            <person name="Purnelle B."/>
            <person name="Ramsperger U."/>
            <person name="Surzycki R."/>
            <person name="Thebault P."/>
            <person name="Vandenbol M."/>
            <person name="Vorhoelter F.J."/>
            <person name="Weidner S."/>
            <person name="Wells D.H."/>
            <person name="Wong K."/>
            <person name="Yeh K.-C."/>
            <person name="Batut J."/>
        </authorList>
    </citation>
    <scope>NUCLEOTIDE SEQUENCE [LARGE SCALE GENOMIC DNA]</scope>
    <source>
        <strain>1021</strain>
    </source>
</reference>
<keyword id="KW-1003">Cell membrane</keyword>
<keyword id="KW-0472">Membrane</keyword>
<keyword id="KW-0614">Plasmid</keyword>
<keyword id="KW-1185">Reference proteome</keyword>
<keyword id="KW-0812">Transmembrane</keyword>
<keyword id="KW-1133">Transmembrane helix</keyword>
<geneLocation type="plasmid">
    <name>pSymB</name>
    <name>megaplasmid 2</name>
</geneLocation>
<protein>
    <recommendedName>
        <fullName evidence="1">UPF0391 membrane protein RB0084</fullName>
    </recommendedName>
</protein>